<dbReference type="EC" id="6.1.1.4" evidence="1"/>
<dbReference type="EMBL" id="AE004969">
    <property type="protein sequence ID" value="AAW88778.2"/>
    <property type="molecule type" value="Genomic_DNA"/>
</dbReference>
<dbReference type="RefSeq" id="WP_025456399.1">
    <property type="nucleotide sequence ID" value="NC_002946.2"/>
</dbReference>
<dbReference type="RefSeq" id="YP_207190.2">
    <property type="nucleotide sequence ID" value="NC_002946.2"/>
</dbReference>
<dbReference type="PDB" id="6YKK">
    <property type="method" value="X-ray"/>
    <property type="resolution" value="2.24 A"/>
    <property type="chains" value="A=1-876"/>
</dbReference>
<dbReference type="PDB" id="6YKL">
    <property type="method" value="X-ray"/>
    <property type="resolution" value="2.27 A"/>
    <property type="chains" value="A=1-876"/>
</dbReference>
<dbReference type="PDB" id="6YKN">
    <property type="method" value="X-ray"/>
    <property type="resolution" value="2.63 A"/>
    <property type="chains" value="A=1-876"/>
</dbReference>
<dbReference type="PDB" id="6YKO">
    <property type="method" value="X-ray"/>
    <property type="resolution" value="2.21 A"/>
    <property type="chains" value="A=1-876"/>
</dbReference>
<dbReference type="PDB" id="6YKQ">
    <property type="method" value="X-ray"/>
    <property type="resolution" value="1.94 A"/>
    <property type="chains" value="A=1-876"/>
</dbReference>
<dbReference type="PDB" id="6YKS">
    <property type="method" value="X-ray"/>
    <property type="resolution" value="1.97 A"/>
    <property type="chains" value="A=1-876"/>
</dbReference>
<dbReference type="PDB" id="6YKT">
    <property type="method" value="X-ray"/>
    <property type="resolution" value="2.32 A"/>
    <property type="chains" value="A=1-876"/>
</dbReference>
<dbReference type="PDB" id="6YKU">
    <property type="method" value="X-ray"/>
    <property type="resolution" value="2.14 A"/>
    <property type="chains" value="A=1-876"/>
</dbReference>
<dbReference type="PDB" id="6YKV">
    <property type="method" value="X-ray"/>
    <property type="resolution" value="2.43 A"/>
    <property type="chains" value="A=1-876"/>
</dbReference>
<dbReference type="PDB" id="6YKW">
    <property type="method" value="X-ray"/>
    <property type="resolution" value="2.46 A"/>
    <property type="chains" value="A=1-876"/>
</dbReference>
<dbReference type="PDB" id="6YKX">
    <property type="method" value="X-ray"/>
    <property type="resolution" value="2.41 A"/>
    <property type="chains" value="A=1-876"/>
</dbReference>
<dbReference type="PDB" id="7A0P">
    <property type="method" value="X-ray"/>
    <property type="resolution" value="2.18 A"/>
    <property type="chains" value="A=1-876"/>
</dbReference>
<dbReference type="PDB" id="7AP2">
    <property type="method" value="X-ray"/>
    <property type="resolution" value="2.25 A"/>
    <property type="chains" value="A=1-876"/>
</dbReference>
<dbReference type="PDBsum" id="6YKK"/>
<dbReference type="PDBsum" id="6YKL"/>
<dbReference type="PDBsum" id="6YKN"/>
<dbReference type="PDBsum" id="6YKO"/>
<dbReference type="PDBsum" id="6YKQ"/>
<dbReference type="PDBsum" id="6YKS"/>
<dbReference type="PDBsum" id="6YKT"/>
<dbReference type="PDBsum" id="6YKU"/>
<dbReference type="PDBsum" id="6YKV"/>
<dbReference type="PDBsum" id="6YKW"/>
<dbReference type="PDBsum" id="6YKX"/>
<dbReference type="PDBsum" id="7A0P"/>
<dbReference type="PDBsum" id="7AP2"/>
<dbReference type="SMR" id="Q5FAJ3"/>
<dbReference type="STRING" id="242231.NGO_0006"/>
<dbReference type="KEGG" id="ngo:NGO_0006"/>
<dbReference type="PATRIC" id="fig|242231.10.peg.7"/>
<dbReference type="HOGENOM" id="CLU_004427_0_0_4"/>
<dbReference type="Proteomes" id="UP000000535">
    <property type="component" value="Chromosome"/>
</dbReference>
<dbReference type="GO" id="GO:0005829">
    <property type="term" value="C:cytosol"/>
    <property type="evidence" value="ECO:0007669"/>
    <property type="project" value="TreeGrafter"/>
</dbReference>
<dbReference type="GO" id="GO:0002161">
    <property type="term" value="F:aminoacyl-tRNA deacylase activity"/>
    <property type="evidence" value="ECO:0007669"/>
    <property type="project" value="InterPro"/>
</dbReference>
<dbReference type="GO" id="GO:0005524">
    <property type="term" value="F:ATP binding"/>
    <property type="evidence" value="ECO:0007669"/>
    <property type="project" value="UniProtKB-UniRule"/>
</dbReference>
<dbReference type="GO" id="GO:0004823">
    <property type="term" value="F:leucine-tRNA ligase activity"/>
    <property type="evidence" value="ECO:0007669"/>
    <property type="project" value="UniProtKB-UniRule"/>
</dbReference>
<dbReference type="GO" id="GO:0006429">
    <property type="term" value="P:leucyl-tRNA aminoacylation"/>
    <property type="evidence" value="ECO:0007669"/>
    <property type="project" value="UniProtKB-UniRule"/>
</dbReference>
<dbReference type="CDD" id="cd07958">
    <property type="entry name" value="Anticodon_Ia_Leu_BEm"/>
    <property type="match status" value="1"/>
</dbReference>
<dbReference type="CDD" id="cd00812">
    <property type="entry name" value="LeuRS_core"/>
    <property type="match status" value="1"/>
</dbReference>
<dbReference type="FunFam" id="1.10.730.10:FF:000003">
    <property type="entry name" value="Leucine--tRNA ligase"/>
    <property type="match status" value="1"/>
</dbReference>
<dbReference type="FunFam" id="2.20.28.290:FF:000001">
    <property type="entry name" value="Leucine--tRNA ligase"/>
    <property type="match status" value="1"/>
</dbReference>
<dbReference type="FunFam" id="3.10.20.590:FF:000001">
    <property type="entry name" value="Leucine--tRNA ligase"/>
    <property type="match status" value="1"/>
</dbReference>
<dbReference type="FunFam" id="3.40.50.620:FF:000003">
    <property type="entry name" value="Leucine--tRNA ligase"/>
    <property type="match status" value="1"/>
</dbReference>
<dbReference type="FunFam" id="3.40.50.620:FF:000124">
    <property type="entry name" value="Leucine--tRNA ligase"/>
    <property type="match status" value="1"/>
</dbReference>
<dbReference type="FunFam" id="3.90.740.10:FF:000012">
    <property type="entry name" value="Leucine--tRNA ligase"/>
    <property type="match status" value="1"/>
</dbReference>
<dbReference type="Gene3D" id="2.20.28.290">
    <property type="match status" value="1"/>
</dbReference>
<dbReference type="Gene3D" id="3.10.20.590">
    <property type="match status" value="1"/>
</dbReference>
<dbReference type="Gene3D" id="3.40.50.620">
    <property type="entry name" value="HUPs"/>
    <property type="match status" value="2"/>
</dbReference>
<dbReference type="Gene3D" id="1.10.730.10">
    <property type="entry name" value="Isoleucyl-tRNA Synthetase, Domain 1"/>
    <property type="match status" value="1"/>
</dbReference>
<dbReference type="Gene3D" id="3.90.740.10">
    <property type="entry name" value="Valyl/Leucyl/Isoleucyl-tRNA synthetase, editing domain"/>
    <property type="match status" value="1"/>
</dbReference>
<dbReference type="HAMAP" id="MF_00049_B">
    <property type="entry name" value="Leu_tRNA_synth_B"/>
    <property type="match status" value="1"/>
</dbReference>
<dbReference type="InterPro" id="IPR001412">
    <property type="entry name" value="aa-tRNA-synth_I_CS"/>
</dbReference>
<dbReference type="InterPro" id="IPR002300">
    <property type="entry name" value="aa-tRNA-synth_Ia"/>
</dbReference>
<dbReference type="InterPro" id="IPR002302">
    <property type="entry name" value="Leu-tRNA-ligase"/>
</dbReference>
<dbReference type="InterPro" id="IPR025709">
    <property type="entry name" value="Leu_tRNA-synth_edit"/>
</dbReference>
<dbReference type="InterPro" id="IPR013155">
    <property type="entry name" value="M/V/L/I-tRNA-synth_anticd-bd"/>
</dbReference>
<dbReference type="InterPro" id="IPR015413">
    <property type="entry name" value="Methionyl/Leucyl_tRNA_Synth"/>
</dbReference>
<dbReference type="InterPro" id="IPR014729">
    <property type="entry name" value="Rossmann-like_a/b/a_fold"/>
</dbReference>
<dbReference type="InterPro" id="IPR009080">
    <property type="entry name" value="tRNAsynth_Ia_anticodon-bd"/>
</dbReference>
<dbReference type="InterPro" id="IPR009008">
    <property type="entry name" value="Val/Leu/Ile-tRNA-synth_edit"/>
</dbReference>
<dbReference type="NCBIfam" id="TIGR00396">
    <property type="entry name" value="leuS_bact"/>
    <property type="match status" value="1"/>
</dbReference>
<dbReference type="PANTHER" id="PTHR43740:SF2">
    <property type="entry name" value="LEUCINE--TRNA LIGASE, MITOCHONDRIAL"/>
    <property type="match status" value="1"/>
</dbReference>
<dbReference type="PANTHER" id="PTHR43740">
    <property type="entry name" value="LEUCYL-TRNA SYNTHETASE"/>
    <property type="match status" value="1"/>
</dbReference>
<dbReference type="Pfam" id="PF08264">
    <property type="entry name" value="Anticodon_1"/>
    <property type="match status" value="1"/>
</dbReference>
<dbReference type="Pfam" id="PF00133">
    <property type="entry name" value="tRNA-synt_1"/>
    <property type="match status" value="2"/>
</dbReference>
<dbReference type="Pfam" id="PF13603">
    <property type="entry name" value="tRNA-synt_1_2"/>
    <property type="match status" value="1"/>
</dbReference>
<dbReference type="Pfam" id="PF09334">
    <property type="entry name" value="tRNA-synt_1g"/>
    <property type="match status" value="1"/>
</dbReference>
<dbReference type="PRINTS" id="PR00985">
    <property type="entry name" value="TRNASYNTHLEU"/>
</dbReference>
<dbReference type="SUPFAM" id="SSF47323">
    <property type="entry name" value="Anticodon-binding domain of a subclass of class I aminoacyl-tRNA synthetases"/>
    <property type="match status" value="1"/>
</dbReference>
<dbReference type="SUPFAM" id="SSF52374">
    <property type="entry name" value="Nucleotidylyl transferase"/>
    <property type="match status" value="1"/>
</dbReference>
<dbReference type="SUPFAM" id="SSF50677">
    <property type="entry name" value="ValRS/IleRS/LeuRS editing domain"/>
    <property type="match status" value="1"/>
</dbReference>
<dbReference type="PROSITE" id="PS00178">
    <property type="entry name" value="AA_TRNA_LIGASE_I"/>
    <property type="match status" value="1"/>
</dbReference>
<evidence type="ECO:0000255" key="1">
    <source>
        <dbReference type="HAMAP-Rule" id="MF_00049"/>
    </source>
</evidence>
<evidence type="ECO:0007829" key="2">
    <source>
        <dbReference type="PDB" id="6YKL"/>
    </source>
</evidence>
<evidence type="ECO:0007829" key="3">
    <source>
        <dbReference type="PDB" id="6YKQ"/>
    </source>
</evidence>
<evidence type="ECO:0007829" key="4">
    <source>
        <dbReference type="PDB" id="6YKV"/>
    </source>
</evidence>
<evidence type="ECO:0007829" key="5">
    <source>
        <dbReference type="PDB" id="7A0P"/>
    </source>
</evidence>
<accession>Q5FAJ3</accession>
<protein>
    <recommendedName>
        <fullName evidence="1">Leucine--tRNA ligase</fullName>
        <ecNumber evidence="1">6.1.1.4</ecNumber>
    </recommendedName>
    <alternativeName>
        <fullName evidence="1">Leucyl-tRNA synthetase</fullName>
        <shortName evidence="1">LeuRS</shortName>
    </alternativeName>
</protein>
<comment type="catalytic activity">
    <reaction evidence="1">
        <text>tRNA(Leu) + L-leucine + ATP = L-leucyl-tRNA(Leu) + AMP + diphosphate</text>
        <dbReference type="Rhea" id="RHEA:11688"/>
        <dbReference type="Rhea" id="RHEA-COMP:9613"/>
        <dbReference type="Rhea" id="RHEA-COMP:9622"/>
        <dbReference type="ChEBI" id="CHEBI:30616"/>
        <dbReference type="ChEBI" id="CHEBI:33019"/>
        <dbReference type="ChEBI" id="CHEBI:57427"/>
        <dbReference type="ChEBI" id="CHEBI:78442"/>
        <dbReference type="ChEBI" id="CHEBI:78494"/>
        <dbReference type="ChEBI" id="CHEBI:456215"/>
        <dbReference type="EC" id="6.1.1.4"/>
    </reaction>
</comment>
<comment type="subcellular location">
    <subcellularLocation>
        <location evidence="1">Cytoplasm</location>
    </subcellularLocation>
</comment>
<comment type="similarity">
    <text evidence="1">Belongs to the class-I aminoacyl-tRNA synthetase family.</text>
</comment>
<name>SYL_NEIG1</name>
<keyword id="KW-0002">3D-structure</keyword>
<keyword id="KW-0030">Aminoacyl-tRNA synthetase</keyword>
<keyword id="KW-0067">ATP-binding</keyword>
<keyword id="KW-0963">Cytoplasm</keyword>
<keyword id="KW-0436">Ligase</keyword>
<keyword id="KW-0547">Nucleotide-binding</keyword>
<keyword id="KW-0648">Protein biosynthesis</keyword>
<keyword id="KW-1185">Reference proteome</keyword>
<sequence length="876" mass="98049">MQEHYQPAAIEPAAQKKWDDARISNVSEDASKPKYYCLSMFPYPSGKLHMGHVRNYTIGDVLSRFKLLNGFNVMQPMGWDAFGMPAENAAMKNNVAPAAWTYDNIEYMKTQLKSLGFAIDWEREVATCKPEYYRWEQWLFTKLFEKGIVYRKNGTVNWDPVDQTVLANEQVIDGRGWRSGALIEKREIPMYYFKITDYAEELLNDLDKLEHWPEQVKTMQRNWIGKSRGMTVRFAVSDDSKQGLEGDYAKFLQVYTTRPDTLMGATYVAVAAEHPLATAAAADKPELQAFIAECKAGSVAEADMATMEKKGVPTGRYVVNPLNGDKLEVWIANYVLWGYGDGAVMAVPAHDERDFEFAAKYNLPKKQVIAVGDNAFDANRWQEWYGDKENGVLVNSGDLDGLDFQTAFDAVAAKLQSQGAGEPKTQYRLRDWGISRQRYWGCPIPIVHCEKCGDVPVPADQLPVVLPENVVPDGMGSPLAKMPEFYETSCPCCGGAAKRETDTMDTFMESSWYFFRYMSPKFSDGMVSAESAKYWGAVDQYIGGIEHAILHLLYARFFTKLMRDEGLVNVDEPFERLLTQGMVVCETYYRENDKGGKDWINPADVELTFDDKGRPVSAVLKADGLPVVISGTEKMSKSKNNGVDPQELINAYGADTARLFMMFAAPPEQSLEWSDSGVEGAHRFLRRLWRTVYEYLKQGGAVKAFAGNQDGLSKELKDLRHKLHSTTAKVSDDYGRRQQFNTAIAAVMELLNQYDKTDTGSEQGRAVAQEVLEAAVRLLWPIVPHICETLWSELNGAKLWEAGWPTVDEAALVKSEIEVMVQVNGKLRGKITVAADASKADLEAAALANEGAVKFMEGKPAKKIIVVPGRLVNIVV</sequence>
<feature type="chain" id="PRO_0000334780" description="Leucine--tRNA ligase">
    <location>
        <begin position="1"/>
        <end position="876"/>
    </location>
</feature>
<feature type="short sequence motif" description="'HIGH' region">
    <location>
        <begin position="42"/>
        <end position="52"/>
    </location>
</feature>
<feature type="short sequence motif" description="'KMSKS' region">
    <location>
        <begin position="634"/>
        <end position="638"/>
    </location>
</feature>
<feature type="binding site" evidence="1">
    <location>
        <position position="637"/>
    </location>
    <ligand>
        <name>ATP</name>
        <dbReference type="ChEBI" id="CHEBI:30616"/>
    </ligand>
</feature>
<feature type="helix" evidence="3">
    <location>
        <begin position="7"/>
        <end position="21"/>
    </location>
</feature>
<feature type="turn" evidence="3">
    <location>
        <begin position="22"/>
        <end position="24"/>
    </location>
</feature>
<feature type="strand" evidence="4">
    <location>
        <begin position="30"/>
        <end position="32"/>
    </location>
</feature>
<feature type="strand" evidence="3">
    <location>
        <begin position="34"/>
        <end position="39"/>
    </location>
</feature>
<feature type="strand" evidence="4">
    <location>
        <begin position="45"/>
        <end position="47"/>
    </location>
</feature>
<feature type="helix" evidence="3">
    <location>
        <begin position="50"/>
        <end position="68"/>
    </location>
</feature>
<feature type="strand" evidence="3">
    <location>
        <begin position="72"/>
        <end position="74"/>
    </location>
</feature>
<feature type="helix" evidence="3">
    <location>
        <begin position="84"/>
        <end position="93"/>
    </location>
</feature>
<feature type="helix" evidence="3">
    <location>
        <begin position="97"/>
        <end position="114"/>
    </location>
</feature>
<feature type="helix" evidence="3">
    <location>
        <begin position="121"/>
        <end position="123"/>
    </location>
</feature>
<feature type="helix" evidence="3">
    <location>
        <begin position="130"/>
        <end position="145"/>
    </location>
</feature>
<feature type="strand" evidence="3">
    <location>
        <begin position="148"/>
        <end position="159"/>
    </location>
</feature>
<feature type="turn" evidence="3">
    <location>
        <begin position="160"/>
        <end position="163"/>
    </location>
</feature>
<feature type="strand" evidence="3">
    <location>
        <begin position="164"/>
        <end position="166"/>
    </location>
</feature>
<feature type="helix" evidence="3">
    <location>
        <begin position="168"/>
        <end position="170"/>
    </location>
</feature>
<feature type="turn" evidence="3">
    <location>
        <begin position="177"/>
        <end position="179"/>
    </location>
</feature>
<feature type="strand" evidence="3">
    <location>
        <begin position="184"/>
        <end position="193"/>
    </location>
</feature>
<feature type="helix" evidence="3">
    <location>
        <begin position="195"/>
        <end position="198"/>
    </location>
</feature>
<feature type="helix" evidence="3">
    <location>
        <begin position="199"/>
        <end position="204"/>
    </location>
</feature>
<feature type="helix" evidence="3">
    <location>
        <begin position="205"/>
        <end position="208"/>
    </location>
</feature>
<feature type="helix" evidence="3">
    <location>
        <begin position="214"/>
        <end position="224"/>
    </location>
</feature>
<feature type="strand" evidence="3">
    <location>
        <begin position="226"/>
        <end position="236"/>
    </location>
</feature>
<feature type="helix" evidence="3">
    <location>
        <begin position="238"/>
        <end position="240"/>
    </location>
</feature>
<feature type="helix" evidence="3">
    <location>
        <begin position="246"/>
        <end position="249"/>
    </location>
</feature>
<feature type="strand" evidence="3">
    <location>
        <begin position="251"/>
        <end position="257"/>
    </location>
</feature>
<feature type="helix" evidence="3">
    <location>
        <begin position="259"/>
        <end position="264"/>
    </location>
</feature>
<feature type="strand" evidence="3">
    <location>
        <begin position="267"/>
        <end position="270"/>
    </location>
</feature>
<feature type="helix" evidence="3">
    <location>
        <begin position="275"/>
        <end position="281"/>
    </location>
</feature>
<feature type="helix" evidence="3">
    <location>
        <begin position="285"/>
        <end position="296"/>
    </location>
</feature>
<feature type="helix" evidence="3">
    <location>
        <begin position="301"/>
        <end position="304"/>
    </location>
</feature>
<feature type="strand" evidence="3">
    <location>
        <begin position="311"/>
        <end position="319"/>
    </location>
</feature>
<feature type="turn" evidence="3">
    <location>
        <begin position="321"/>
        <end position="323"/>
    </location>
</feature>
<feature type="strand" evidence="3">
    <location>
        <begin position="326"/>
        <end position="332"/>
    </location>
</feature>
<feature type="strand" evidence="3">
    <location>
        <begin position="342"/>
        <end position="346"/>
    </location>
</feature>
<feature type="turn" evidence="3">
    <location>
        <begin position="348"/>
        <end position="350"/>
    </location>
</feature>
<feature type="helix" evidence="3">
    <location>
        <begin position="352"/>
        <end position="361"/>
    </location>
</feature>
<feature type="strand" evidence="2">
    <location>
        <begin position="378"/>
        <end position="380"/>
    </location>
</feature>
<feature type="helix" evidence="3">
    <location>
        <begin position="383"/>
        <end position="386"/>
    </location>
</feature>
<feature type="strand" evidence="3">
    <location>
        <begin position="388"/>
        <end position="390"/>
    </location>
</feature>
<feature type="helix" evidence="3">
    <location>
        <begin position="397"/>
        <end position="399"/>
    </location>
</feature>
<feature type="helix" evidence="3">
    <location>
        <begin position="404"/>
        <end position="417"/>
    </location>
</feature>
<feature type="strand" evidence="3">
    <location>
        <begin position="420"/>
        <end position="427"/>
    </location>
</feature>
<feature type="strand" evidence="2">
    <location>
        <begin position="435"/>
        <end position="437"/>
    </location>
</feature>
<feature type="strand" evidence="3">
    <location>
        <begin position="439"/>
        <end position="441"/>
    </location>
</feature>
<feature type="strand" evidence="3">
    <location>
        <begin position="446"/>
        <end position="449"/>
    </location>
</feature>
<feature type="turn" evidence="3">
    <location>
        <begin position="450"/>
        <end position="452"/>
    </location>
</feature>
<feature type="strand" evidence="3">
    <location>
        <begin position="453"/>
        <end position="456"/>
    </location>
</feature>
<feature type="helix" evidence="3">
    <location>
        <begin position="459"/>
        <end position="461"/>
    </location>
</feature>
<feature type="strand" evidence="3">
    <location>
        <begin position="474"/>
        <end position="476"/>
    </location>
</feature>
<feature type="helix" evidence="3">
    <location>
        <begin position="478"/>
        <end position="481"/>
    </location>
</feature>
<feature type="helix" evidence="3">
    <location>
        <begin position="483"/>
        <end position="486"/>
    </location>
</feature>
<feature type="strand" evidence="3">
    <location>
        <begin position="487"/>
        <end position="489"/>
    </location>
</feature>
<feature type="turn" evidence="3">
    <location>
        <begin position="491"/>
        <end position="493"/>
    </location>
</feature>
<feature type="strand" evidence="3">
    <location>
        <begin position="496"/>
        <end position="499"/>
    </location>
</feature>
<feature type="helix" evidence="3">
    <location>
        <begin position="507"/>
        <end position="510"/>
    </location>
</feature>
<feature type="helix" evidence="3">
    <location>
        <begin position="513"/>
        <end position="516"/>
    </location>
</feature>
<feature type="strand" evidence="3">
    <location>
        <begin position="523"/>
        <end position="527"/>
    </location>
</feature>
<feature type="helix" evidence="3">
    <location>
        <begin position="529"/>
        <end position="535"/>
    </location>
</feature>
<feature type="strand" evidence="3">
    <location>
        <begin position="537"/>
        <end position="544"/>
    </location>
</feature>
<feature type="helix" evidence="3">
    <location>
        <begin position="545"/>
        <end position="547"/>
    </location>
</feature>
<feature type="helix" evidence="3">
    <location>
        <begin position="550"/>
        <end position="564"/>
    </location>
</feature>
<feature type="strand" evidence="3">
    <location>
        <begin position="573"/>
        <end position="580"/>
    </location>
</feature>
<feature type="strand" evidence="3">
    <location>
        <begin position="583"/>
        <end position="591"/>
    </location>
</feature>
<feature type="strand" evidence="5">
    <location>
        <begin position="593"/>
        <end position="595"/>
    </location>
</feature>
<feature type="strand" evidence="3">
    <location>
        <begin position="597"/>
        <end position="600"/>
    </location>
</feature>
<feature type="helix" evidence="3">
    <location>
        <begin position="602"/>
        <end position="604"/>
    </location>
</feature>
<feature type="strand" evidence="3">
    <location>
        <begin position="605"/>
        <end position="607"/>
    </location>
</feature>
<feature type="strand" evidence="3">
    <location>
        <begin position="618"/>
        <end position="620"/>
    </location>
</feature>
<feature type="turn" evidence="3">
    <location>
        <begin position="621"/>
        <end position="623"/>
    </location>
</feature>
<feature type="strand" evidence="3">
    <location>
        <begin position="626"/>
        <end position="634"/>
    </location>
</feature>
<feature type="turn" evidence="3">
    <location>
        <begin position="637"/>
        <end position="640"/>
    </location>
</feature>
<feature type="helix" evidence="3">
    <location>
        <begin position="645"/>
        <end position="652"/>
    </location>
</feature>
<feature type="helix" evidence="3">
    <location>
        <begin position="654"/>
        <end position="664"/>
    </location>
</feature>
<feature type="strand" evidence="4">
    <location>
        <begin position="667"/>
        <end position="669"/>
    </location>
</feature>
<feature type="helix" evidence="3">
    <location>
        <begin position="675"/>
        <end position="697"/>
    </location>
</feature>
<feature type="helix" evidence="3">
    <location>
        <begin position="714"/>
        <end position="735"/>
    </location>
</feature>
<feature type="helix" evidence="3">
    <location>
        <begin position="740"/>
        <end position="755"/>
    </location>
</feature>
<feature type="helix" evidence="3">
    <location>
        <begin position="762"/>
        <end position="779"/>
    </location>
</feature>
<feature type="turn" evidence="3">
    <location>
        <begin position="780"/>
        <end position="782"/>
    </location>
</feature>
<feature type="helix" evidence="3">
    <location>
        <begin position="784"/>
        <end position="794"/>
    </location>
</feature>
<feature type="helix" evidence="3">
    <location>
        <begin position="799"/>
        <end position="802"/>
    </location>
</feature>
<feature type="helix" evidence="3">
    <location>
        <begin position="809"/>
        <end position="812"/>
    </location>
</feature>
<feature type="strand" evidence="3">
    <location>
        <begin position="820"/>
        <end position="823"/>
    </location>
</feature>
<feature type="helix" evidence="3">
    <location>
        <begin position="841"/>
        <end position="847"/>
    </location>
</feature>
<feature type="strand" evidence="3">
    <location>
        <begin position="865"/>
        <end position="867"/>
    </location>
</feature>
<feature type="turn" evidence="3">
    <location>
        <begin position="868"/>
        <end position="870"/>
    </location>
</feature>
<feature type="strand" evidence="3">
    <location>
        <begin position="871"/>
        <end position="874"/>
    </location>
</feature>
<reference key="1">
    <citation type="submission" date="2003-03" db="EMBL/GenBank/DDBJ databases">
        <title>The complete genome sequence of Neisseria gonorrhoeae.</title>
        <authorList>
            <person name="Lewis L.A."/>
            <person name="Gillaspy A.F."/>
            <person name="McLaughlin R.E."/>
            <person name="Gipson M."/>
            <person name="Ducey T.F."/>
            <person name="Ownbey T."/>
            <person name="Hartman K."/>
            <person name="Nydick C."/>
            <person name="Carson M.B."/>
            <person name="Vaughn J."/>
            <person name="Thomson C."/>
            <person name="Song L."/>
            <person name="Lin S."/>
            <person name="Yuan X."/>
            <person name="Najar F."/>
            <person name="Zhan M."/>
            <person name="Ren Q."/>
            <person name="Zhu H."/>
            <person name="Qi S."/>
            <person name="Kenton S.M."/>
            <person name="Lai H."/>
            <person name="White J.D."/>
            <person name="Clifton S."/>
            <person name="Roe B.A."/>
            <person name="Dyer D.W."/>
        </authorList>
    </citation>
    <scope>NUCLEOTIDE SEQUENCE [LARGE SCALE GENOMIC DNA]</scope>
    <source>
        <strain>ATCC 700825 / FA 1090</strain>
    </source>
</reference>
<organism>
    <name type="scientific">Neisseria gonorrhoeae (strain ATCC 700825 / FA 1090)</name>
    <dbReference type="NCBI Taxonomy" id="242231"/>
    <lineage>
        <taxon>Bacteria</taxon>
        <taxon>Pseudomonadati</taxon>
        <taxon>Pseudomonadota</taxon>
        <taxon>Betaproteobacteria</taxon>
        <taxon>Neisseriales</taxon>
        <taxon>Neisseriaceae</taxon>
        <taxon>Neisseria</taxon>
    </lineage>
</organism>
<gene>
    <name evidence="1" type="primary">leuS</name>
    <name type="ordered locus">NGO_0006</name>
</gene>
<proteinExistence type="evidence at protein level"/>